<comment type="function">
    <text evidence="1">Transcriptional repressor regulating the expression of a number of genes including SP1 target genes. Probably functions through recruitment of HDAC1 a histone deacetylase involved in chromatin silencing (By similarity).</text>
</comment>
<comment type="subunit">
    <text evidence="1">Interacts with HDAC1. Part of a complex containing at least CDYL, MIER1, MIER2, HDAC1 and HDAC2.</text>
</comment>
<comment type="subcellular location">
    <subcellularLocation>
        <location evidence="3 4">Nucleus</location>
    </subcellularLocation>
</comment>
<comment type="sequence caution" evidence="6">
    <conflict type="erroneous initiation">
        <sequence resource="EMBL-CDS" id="CAH89866"/>
    </conflict>
</comment>
<reference key="1">
    <citation type="submission" date="2004-11" db="EMBL/GenBank/DDBJ databases">
        <authorList>
            <consortium name="The German cDNA consortium"/>
        </authorList>
    </citation>
    <scope>NUCLEOTIDE SEQUENCE [LARGE SCALE MRNA]</scope>
    <source>
        <tissue>Brain cortex</tissue>
    </source>
</reference>
<keyword id="KW-1017">Isopeptide bond</keyword>
<keyword id="KW-0539">Nucleus</keyword>
<keyword id="KW-0597">Phosphoprotein</keyword>
<keyword id="KW-1185">Reference proteome</keyword>
<keyword id="KW-0678">Repressor</keyword>
<keyword id="KW-0804">Transcription</keyword>
<keyword id="KW-0805">Transcription regulation</keyword>
<keyword id="KW-0832">Ubl conjugation</keyword>
<protein>
    <recommendedName>
        <fullName>Mesoderm induction early response protein 1</fullName>
        <shortName>Early response 1</shortName>
        <shortName>Er1</shortName>
        <shortName>Mi-er1</shortName>
    </recommendedName>
</protein>
<gene>
    <name type="primary">MIER1</name>
</gene>
<evidence type="ECO:0000250" key="1"/>
<evidence type="ECO:0000250" key="2">
    <source>
        <dbReference type="UniProtKB" id="Q8N108"/>
    </source>
</evidence>
<evidence type="ECO:0000255" key="3">
    <source>
        <dbReference type="PROSITE-ProRule" id="PRU00512"/>
    </source>
</evidence>
<evidence type="ECO:0000255" key="4">
    <source>
        <dbReference type="PROSITE-ProRule" id="PRU00624"/>
    </source>
</evidence>
<evidence type="ECO:0000256" key="5">
    <source>
        <dbReference type="SAM" id="MobiDB-lite"/>
    </source>
</evidence>
<evidence type="ECO:0000305" key="6"/>
<accession>Q5REE1</accession>
<sequence>MAEPSVESSSPGGSATSDDHEFDPSADMLVHDFDDERTLEEEEMMEGETNFSSEIEDLAREGDMPIHELLSLYGYGSTVRLPEEDEEEEEEEEEGEDDEDADNDDNSGCSGENKEENIKDSSGQEDETQSSNDDPSQSVASQDAQEIIRPRRCKYFDTNSEVEEESEEDEDYIPSEDWKKEIMVGSMFQAEIPVGICRYKENEKVYENDDQLLWDPEYLPEDKVIIFLKDASRRTGDEKGVEAIPEGSHIKDNEQALYELVKCNFDTEEALRRLRFNVKAAREELSVWTEEECRNFEQGLKAYGKDFHLIQANKVRTRSVGECVAFYYMWKKSERYDFFAQQTRFGKKKYNLHPGVTDYMDRLLDESESAASSRAPSPPPTASNSSNSQSEKEDGTVSTTNQNGVSSNGPGEILNKEEVKVEGLHINGPTGGNKKPLHADMDTNGYETDNLTTDPKLAHMTARNENDFDEKSERPAKRRRVNSNGKESPGSSEFFQEAVSHGKFEELENTDD</sequence>
<dbReference type="EMBL" id="CR857588">
    <property type="protein sequence ID" value="CAH89866.1"/>
    <property type="status" value="ALT_INIT"/>
    <property type="molecule type" value="mRNA"/>
</dbReference>
<dbReference type="RefSeq" id="XP_024102126.1">
    <property type="nucleotide sequence ID" value="XM_024246358.3"/>
</dbReference>
<dbReference type="FunCoup" id="Q5REE1">
    <property type="interactions" value="2473"/>
</dbReference>
<dbReference type="STRING" id="9601.ENSPPYP00000001469"/>
<dbReference type="Ensembl" id="ENSPPYT00000047828.1">
    <property type="protein sequence ID" value="ENSPPYP00000041036.1"/>
    <property type="gene ID" value="ENSPPYG00000001261.3"/>
</dbReference>
<dbReference type="GeneID" id="100171732"/>
<dbReference type="eggNOG" id="KOG4329">
    <property type="taxonomic scope" value="Eukaryota"/>
</dbReference>
<dbReference type="GeneTree" id="ENSGT01030000234573"/>
<dbReference type="InParanoid" id="Q5REE1"/>
<dbReference type="Proteomes" id="UP000001595">
    <property type="component" value="Chromosome 1"/>
</dbReference>
<dbReference type="GO" id="GO:0005654">
    <property type="term" value="C:nucleoplasm"/>
    <property type="evidence" value="ECO:0007669"/>
    <property type="project" value="TreeGrafter"/>
</dbReference>
<dbReference type="GO" id="GO:0017053">
    <property type="term" value="C:transcription repressor complex"/>
    <property type="evidence" value="ECO:0000250"/>
    <property type="project" value="UniProtKB"/>
</dbReference>
<dbReference type="GO" id="GO:0042826">
    <property type="term" value="F:histone deacetylase binding"/>
    <property type="evidence" value="ECO:0007669"/>
    <property type="project" value="TreeGrafter"/>
</dbReference>
<dbReference type="GO" id="GO:0003714">
    <property type="term" value="F:transcription corepressor activity"/>
    <property type="evidence" value="ECO:0007669"/>
    <property type="project" value="TreeGrafter"/>
</dbReference>
<dbReference type="GO" id="GO:0006338">
    <property type="term" value="P:chromatin remodeling"/>
    <property type="evidence" value="ECO:0000250"/>
    <property type="project" value="UniProtKB"/>
</dbReference>
<dbReference type="GO" id="GO:0000122">
    <property type="term" value="P:negative regulation of transcription by RNA polymerase II"/>
    <property type="evidence" value="ECO:0007669"/>
    <property type="project" value="TreeGrafter"/>
</dbReference>
<dbReference type="GO" id="GO:0006355">
    <property type="term" value="P:regulation of DNA-templated transcription"/>
    <property type="evidence" value="ECO:0000250"/>
    <property type="project" value="UniProtKB"/>
</dbReference>
<dbReference type="CDD" id="cd11661">
    <property type="entry name" value="SANT_MTA3_like"/>
    <property type="match status" value="1"/>
</dbReference>
<dbReference type="FunFam" id="1.10.10.60:FF:000025">
    <property type="entry name" value="Mesoderm induction early response 1, transcriptional regulator"/>
    <property type="match status" value="1"/>
</dbReference>
<dbReference type="Gene3D" id="1.10.10.60">
    <property type="entry name" value="Homeodomain-like"/>
    <property type="match status" value="1"/>
</dbReference>
<dbReference type="InterPro" id="IPR000949">
    <property type="entry name" value="ELM2_dom"/>
</dbReference>
<dbReference type="InterPro" id="IPR009057">
    <property type="entry name" value="Homeodomain-like_sf"/>
</dbReference>
<dbReference type="InterPro" id="IPR040138">
    <property type="entry name" value="MIER/MTA"/>
</dbReference>
<dbReference type="InterPro" id="IPR045787">
    <property type="entry name" value="MIER1/3_C"/>
</dbReference>
<dbReference type="InterPro" id="IPR001005">
    <property type="entry name" value="SANT/Myb"/>
</dbReference>
<dbReference type="InterPro" id="IPR017884">
    <property type="entry name" value="SANT_dom"/>
</dbReference>
<dbReference type="PANTHER" id="PTHR10865:SF24">
    <property type="entry name" value="MESODERM INDUCTION EARLY RESPONSE PROTEIN 1"/>
    <property type="match status" value="1"/>
</dbReference>
<dbReference type="PANTHER" id="PTHR10865">
    <property type="entry name" value="METASTASIS-ASSOCIATED PROTEIN AND MESODERM INDUCTION EARLY RESPONSE PROTEIN"/>
    <property type="match status" value="1"/>
</dbReference>
<dbReference type="Pfam" id="PF01448">
    <property type="entry name" value="ELM2"/>
    <property type="match status" value="1"/>
</dbReference>
<dbReference type="Pfam" id="PF19426">
    <property type="entry name" value="MIER1_3_C"/>
    <property type="match status" value="1"/>
</dbReference>
<dbReference type="Pfam" id="PF00249">
    <property type="entry name" value="Myb_DNA-binding"/>
    <property type="match status" value="1"/>
</dbReference>
<dbReference type="SMART" id="SM01189">
    <property type="entry name" value="ELM2"/>
    <property type="match status" value="1"/>
</dbReference>
<dbReference type="SMART" id="SM00717">
    <property type="entry name" value="SANT"/>
    <property type="match status" value="1"/>
</dbReference>
<dbReference type="SUPFAM" id="SSF46689">
    <property type="entry name" value="Homeodomain-like"/>
    <property type="match status" value="1"/>
</dbReference>
<dbReference type="PROSITE" id="PS51156">
    <property type="entry name" value="ELM2"/>
    <property type="match status" value="1"/>
</dbReference>
<dbReference type="PROSITE" id="PS51293">
    <property type="entry name" value="SANT"/>
    <property type="match status" value="1"/>
</dbReference>
<proteinExistence type="evidence at transcript level"/>
<name>MIER1_PONAB</name>
<feature type="chain" id="PRO_0000197143" description="Mesoderm induction early response protein 1">
    <location>
        <begin position="1"/>
        <end position="512"/>
    </location>
</feature>
<feature type="domain" description="ELM2" evidence="3">
    <location>
        <begin position="180"/>
        <end position="278"/>
    </location>
</feature>
<feature type="domain" description="SANT" evidence="4">
    <location>
        <begin position="283"/>
        <end position="335"/>
    </location>
</feature>
<feature type="region of interest" description="Disordered" evidence="5">
    <location>
        <begin position="1"/>
        <end position="63"/>
    </location>
</feature>
<feature type="region of interest" description="Disordered" evidence="5">
    <location>
        <begin position="75"/>
        <end position="173"/>
    </location>
</feature>
<feature type="region of interest" description="Interaction with HDAC1" evidence="1">
    <location>
        <begin position="180"/>
        <end position="284"/>
    </location>
</feature>
<feature type="region of interest" description="Disordered" evidence="5">
    <location>
        <begin position="366"/>
        <end position="512"/>
    </location>
</feature>
<feature type="compositionally biased region" description="Low complexity" evidence="5">
    <location>
        <begin position="1"/>
        <end position="16"/>
    </location>
</feature>
<feature type="compositionally biased region" description="Basic and acidic residues" evidence="5">
    <location>
        <begin position="17"/>
        <end position="36"/>
    </location>
</feature>
<feature type="compositionally biased region" description="Acidic residues" evidence="5">
    <location>
        <begin position="37"/>
        <end position="46"/>
    </location>
</feature>
<feature type="compositionally biased region" description="Acidic residues" evidence="5">
    <location>
        <begin position="83"/>
        <end position="105"/>
    </location>
</feature>
<feature type="compositionally biased region" description="Polar residues" evidence="5">
    <location>
        <begin position="129"/>
        <end position="144"/>
    </location>
</feature>
<feature type="compositionally biased region" description="Acidic residues" evidence="5">
    <location>
        <begin position="160"/>
        <end position="173"/>
    </location>
</feature>
<feature type="compositionally biased region" description="Polar residues" evidence="5">
    <location>
        <begin position="396"/>
        <end position="409"/>
    </location>
</feature>
<feature type="compositionally biased region" description="Basic and acidic residues" evidence="5">
    <location>
        <begin position="414"/>
        <end position="423"/>
    </location>
</feature>
<feature type="compositionally biased region" description="Basic and acidic residues" evidence="5">
    <location>
        <begin position="462"/>
        <end position="475"/>
    </location>
</feature>
<feature type="compositionally biased region" description="Polar residues" evidence="5">
    <location>
        <begin position="482"/>
        <end position="494"/>
    </location>
</feature>
<feature type="modified residue" description="Phosphoserine" evidence="2">
    <location>
        <position position="10"/>
    </location>
</feature>
<feature type="modified residue" description="Phosphoserine" evidence="2">
    <location>
        <position position="141"/>
    </location>
</feature>
<feature type="modified residue" description="Phosphotyrosine" evidence="2">
    <location>
        <position position="155"/>
    </location>
</feature>
<feature type="modified residue" description="Phosphoserine" evidence="2">
    <location>
        <position position="160"/>
    </location>
</feature>
<feature type="modified residue" description="Phosphoserine" evidence="2">
    <location>
        <position position="166"/>
    </location>
</feature>
<feature type="modified residue" description="Phosphoserine" evidence="2">
    <location>
        <position position="367"/>
    </location>
</feature>
<feature type="modified residue" description="Phosphoserine" evidence="2">
    <location>
        <position position="369"/>
    </location>
</feature>
<feature type="modified residue" description="Phosphoserine" evidence="2">
    <location>
        <position position="377"/>
    </location>
</feature>
<feature type="modified residue" description="Phosphothreonine" evidence="2">
    <location>
        <position position="448"/>
    </location>
</feature>
<feature type="modified residue" description="Phosphoserine" evidence="2">
    <location>
        <position position="483"/>
    </location>
</feature>
<feature type="modified residue" description="Phosphoserine" evidence="2">
    <location>
        <position position="488"/>
    </location>
</feature>
<feature type="modified residue" description="Phosphoserine" evidence="2">
    <location>
        <position position="491"/>
    </location>
</feature>
<feature type="cross-link" description="Glycyl lysine isopeptide (Lys-Gly) (interchain with G-Cter in SUMO2)" evidence="2">
    <location>
        <position position="239"/>
    </location>
</feature>
<feature type="cross-link" description="Glycyl lysine isopeptide (Lys-Gly) (interchain with G-Cter in SUMO2)" evidence="2">
    <location>
        <position position="420"/>
    </location>
</feature>
<organism>
    <name type="scientific">Pongo abelii</name>
    <name type="common">Sumatran orangutan</name>
    <name type="synonym">Pongo pygmaeus abelii</name>
    <dbReference type="NCBI Taxonomy" id="9601"/>
    <lineage>
        <taxon>Eukaryota</taxon>
        <taxon>Metazoa</taxon>
        <taxon>Chordata</taxon>
        <taxon>Craniata</taxon>
        <taxon>Vertebrata</taxon>
        <taxon>Euteleostomi</taxon>
        <taxon>Mammalia</taxon>
        <taxon>Eutheria</taxon>
        <taxon>Euarchontoglires</taxon>
        <taxon>Primates</taxon>
        <taxon>Haplorrhini</taxon>
        <taxon>Catarrhini</taxon>
        <taxon>Hominidae</taxon>
        <taxon>Pongo</taxon>
    </lineage>
</organism>